<protein>
    <recommendedName>
        <fullName evidence="1">3-methyl-2-oxobutanoate hydroxymethyltransferase</fullName>
        <ecNumber evidence="1">2.1.2.11</ecNumber>
    </recommendedName>
    <alternativeName>
        <fullName evidence="1">Ketopantoate hydroxymethyltransferase</fullName>
        <shortName evidence="1">KPHMT</shortName>
    </alternativeName>
</protein>
<gene>
    <name evidence="1" type="primary">panB</name>
    <name type="ordered locus">Sde_3379</name>
</gene>
<name>PANB_SACD2</name>
<keyword id="KW-0963">Cytoplasm</keyword>
<keyword id="KW-0460">Magnesium</keyword>
<keyword id="KW-0479">Metal-binding</keyword>
<keyword id="KW-0566">Pantothenate biosynthesis</keyword>
<keyword id="KW-1185">Reference proteome</keyword>
<keyword id="KW-0808">Transferase</keyword>
<evidence type="ECO:0000255" key="1">
    <source>
        <dbReference type="HAMAP-Rule" id="MF_00156"/>
    </source>
</evidence>
<feature type="chain" id="PRO_0000297362" description="3-methyl-2-oxobutanoate hydroxymethyltransferase">
    <location>
        <begin position="1"/>
        <end position="270"/>
    </location>
</feature>
<feature type="active site" description="Proton acceptor" evidence="1">
    <location>
        <position position="189"/>
    </location>
</feature>
<feature type="binding site" evidence="1">
    <location>
        <begin position="53"/>
        <end position="54"/>
    </location>
    <ligand>
        <name>3-methyl-2-oxobutanoate</name>
        <dbReference type="ChEBI" id="CHEBI:11851"/>
    </ligand>
</feature>
<feature type="binding site" evidence="1">
    <location>
        <position position="53"/>
    </location>
    <ligand>
        <name>Mg(2+)</name>
        <dbReference type="ChEBI" id="CHEBI:18420"/>
    </ligand>
</feature>
<feature type="binding site" evidence="1">
    <location>
        <position position="92"/>
    </location>
    <ligand>
        <name>3-methyl-2-oxobutanoate</name>
        <dbReference type="ChEBI" id="CHEBI:11851"/>
    </ligand>
</feature>
<feature type="binding site" evidence="1">
    <location>
        <position position="92"/>
    </location>
    <ligand>
        <name>Mg(2+)</name>
        <dbReference type="ChEBI" id="CHEBI:18420"/>
    </ligand>
</feature>
<feature type="binding site" evidence="1">
    <location>
        <position position="120"/>
    </location>
    <ligand>
        <name>3-methyl-2-oxobutanoate</name>
        <dbReference type="ChEBI" id="CHEBI:11851"/>
    </ligand>
</feature>
<feature type="binding site" evidence="1">
    <location>
        <position position="122"/>
    </location>
    <ligand>
        <name>Mg(2+)</name>
        <dbReference type="ChEBI" id="CHEBI:18420"/>
    </ligand>
</feature>
<sequence length="270" mass="28961">MVYTATPLEKKVTVNTLRKMKADKEKFITVALYDAPMAAMAQKCGVEVVLIGDSLGMTVLGYDSTVPVTMEQMIYHIEAVARGNSRSLIIGDLPFMTYATVEQTMINATRVMQAGAHMVKMEGGAWLVDSVRMLSERGIPVCAHLGLTPQSVNKFGGFRVQGRSEEQGEQIIADALALEEAGADLLVLECIPAELGARVTQALSIPTIGIGAGIGTDAQVLVINDILGLTEFPPKFSKNFLLEAKDIPGALQKYAADVKSGVFPGPEQQF</sequence>
<proteinExistence type="inferred from homology"/>
<dbReference type="EC" id="2.1.2.11" evidence="1"/>
<dbReference type="EMBL" id="CP000282">
    <property type="protein sequence ID" value="ABD82634.1"/>
    <property type="molecule type" value="Genomic_DNA"/>
</dbReference>
<dbReference type="RefSeq" id="WP_011469850.1">
    <property type="nucleotide sequence ID" value="NC_007912.1"/>
</dbReference>
<dbReference type="SMR" id="Q21F95"/>
<dbReference type="STRING" id="203122.Sde_3379"/>
<dbReference type="GeneID" id="98614997"/>
<dbReference type="KEGG" id="sde:Sde_3379"/>
<dbReference type="eggNOG" id="COG0413">
    <property type="taxonomic scope" value="Bacteria"/>
</dbReference>
<dbReference type="HOGENOM" id="CLU_036645_1_0_6"/>
<dbReference type="OrthoDB" id="9781789at2"/>
<dbReference type="UniPathway" id="UPA00028">
    <property type="reaction ID" value="UER00003"/>
</dbReference>
<dbReference type="Proteomes" id="UP000001947">
    <property type="component" value="Chromosome"/>
</dbReference>
<dbReference type="GO" id="GO:0005737">
    <property type="term" value="C:cytoplasm"/>
    <property type="evidence" value="ECO:0007669"/>
    <property type="project" value="UniProtKB-SubCell"/>
</dbReference>
<dbReference type="GO" id="GO:0003864">
    <property type="term" value="F:3-methyl-2-oxobutanoate hydroxymethyltransferase activity"/>
    <property type="evidence" value="ECO:0007669"/>
    <property type="project" value="UniProtKB-UniRule"/>
</dbReference>
<dbReference type="GO" id="GO:0000287">
    <property type="term" value="F:magnesium ion binding"/>
    <property type="evidence" value="ECO:0007669"/>
    <property type="project" value="TreeGrafter"/>
</dbReference>
<dbReference type="GO" id="GO:0015940">
    <property type="term" value="P:pantothenate biosynthetic process"/>
    <property type="evidence" value="ECO:0007669"/>
    <property type="project" value="UniProtKB-UniRule"/>
</dbReference>
<dbReference type="CDD" id="cd06557">
    <property type="entry name" value="KPHMT-like"/>
    <property type="match status" value="1"/>
</dbReference>
<dbReference type="FunFam" id="3.20.20.60:FF:000003">
    <property type="entry name" value="3-methyl-2-oxobutanoate hydroxymethyltransferase"/>
    <property type="match status" value="1"/>
</dbReference>
<dbReference type="Gene3D" id="3.20.20.60">
    <property type="entry name" value="Phosphoenolpyruvate-binding domains"/>
    <property type="match status" value="1"/>
</dbReference>
<dbReference type="HAMAP" id="MF_00156">
    <property type="entry name" value="PanB"/>
    <property type="match status" value="1"/>
</dbReference>
<dbReference type="InterPro" id="IPR003700">
    <property type="entry name" value="Pantoate_hydroxy_MeTrfase"/>
</dbReference>
<dbReference type="InterPro" id="IPR015813">
    <property type="entry name" value="Pyrv/PenolPyrv_kinase-like_dom"/>
</dbReference>
<dbReference type="InterPro" id="IPR040442">
    <property type="entry name" value="Pyrv_kinase-like_dom_sf"/>
</dbReference>
<dbReference type="NCBIfam" id="TIGR00222">
    <property type="entry name" value="panB"/>
    <property type="match status" value="1"/>
</dbReference>
<dbReference type="NCBIfam" id="NF001452">
    <property type="entry name" value="PRK00311.1"/>
    <property type="match status" value="1"/>
</dbReference>
<dbReference type="PANTHER" id="PTHR20881">
    <property type="entry name" value="3-METHYL-2-OXOBUTANOATE HYDROXYMETHYLTRANSFERASE"/>
    <property type="match status" value="1"/>
</dbReference>
<dbReference type="PANTHER" id="PTHR20881:SF0">
    <property type="entry name" value="3-METHYL-2-OXOBUTANOATE HYDROXYMETHYLTRANSFERASE"/>
    <property type="match status" value="1"/>
</dbReference>
<dbReference type="Pfam" id="PF02548">
    <property type="entry name" value="Pantoate_transf"/>
    <property type="match status" value="1"/>
</dbReference>
<dbReference type="PIRSF" id="PIRSF000388">
    <property type="entry name" value="Pantoate_hydroxy_MeTrfase"/>
    <property type="match status" value="1"/>
</dbReference>
<dbReference type="SUPFAM" id="SSF51621">
    <property type="entry name" value="Phosphoenolpyruvate/pyruvate domain"/>
    <property type="match status" value="1"/>
</dbReference>
<organism>
    <name type="scientific">Saccharophagus degradans (strain 2-40 / ATCC 43961 / DSM 17024)</name>
    <dbReference type="NCBI Taxonomy" id="203122"/>
    <lineage>
        <taxon>Bacteria</taxon>
        <taxon>Pseudomonadati</taxon>
        <taxon>Pseudomonadota</taxon>
        <taxon>Gammaproteobacteria</taxon>
        <taxon>Cellvibrionales</taxon>
        <taxon>Cellvibrionaceae</taxon>
        <taxon>Saccharophagus</taxon>
    </lineage>
</organism>
<accession>Q21F95</accession>
<comment type="function">
    <text evidence="1">Catalyzes the reversible reaction in which hydroxymethyl group from 5,10-methylenetetrahydrofolate is transferred onto alpha-ketoisovalerate to form ketopantoate.</text>
</comment>
<comment type="catalytic activity">
    <reaction evidence="1">
        <text>3-methyl-2-oxobutanoate + (6R)-5,10-methylene-5,6,7,8-tetrahydrofolate + H2O = 2-dehydropantoate + (6S)-5,6,7,8-tetrahydrofolate</text>
        <dbReference type="Rhea" id="RHEA:11824"/>
        <dbReference type="ChEBI" id="CHEBI:11561"/>
        <dbReference type="ChEBI" id="CHEBI:11851"/>
        <dbReference type="ChEBI" id="CHEBI:15377"/>
        <dbReference type="ChEBI" id="CHEBI:15636"/>
        <dbReference type="ChEBI" id="CHEBI:57453"/>
        <dbReference type="EC" id="2.1.2.11"/>
    </reaction>
</comment>
<comment type="cofactor">
    <cofactor evidence="1">
        <name>Mg(2+)</name>
        <dbReference type="ChEBI" id="CHEBI:18420"/>
    </cofactor>
    <text evidence="1">Binds 1 Mg(2+) ion per subunit.</text>
</comment>
<comment type="pathway">
    <text evidence="1">Cofactor biosynthesis; (R)-pantothenate biosynthesis; (R)-pantoate from 3-methyl-2-oxobutanoate: step 1/2.</text>
</comment>
<comment type="subunit">
    <text evidence="1">Homodecamer; pentamer of dimers.</text>
</comment>
<comment type="subcellular location">
    <subcellularLocation>
        <location evidence="1">Cytoplasm</location>
    </subcellularLocation>
</comment>
<comment type="similarity">
    <text evidence="1">Belongs to the PanB family.</text>
</comment>
<reference key="1">
    <citation type="journal article" date="2008" name="PLoS Genet.">
        <title>Complete genome sequence of the complex carbohydrate-degrading marine bacterium, Saccharophagus degradans strain 2-40 T.</title>
        <authorList>
            <person name="Weiner R.M."/>
            <person name="Taylor L.E. II"/>
            <person name="Henrissat B."/>
            <person name="Hauser L."/>
            <person name="Land M."/>
            <person name="Coutinho P.M."/>
            <person name="Rancurel C."/>
            <person name="Saunders E.H."/>
            <person name="Longmire A.G."/>
            <person name="Zhang H."/>
            <person name="Bayer E.A."/>
            <person name="Gilbert H.J."/>
            <person name="Larimer F."/>
            <person name="Zhulin I.B."/>
            <person name="Ekborg N.A."/>
            <person name="Lamed R."/>
            <person name="Richardson P.M."/>
            <person name="Borovok I."/>
            <person name="Hutcheson S."/>
        </authorList>
    </citation>
    <scope>NUCLEOTIDE SEQUENCE [LARGE SCALE GENOMIC DNA]</scope>
    <source>
        <strain>2-40 / ATCC 43961 / DSM 17024</strain>
    </source>
</reference>